<proteinExistence type="evidence at protein level"/>
<sequence length="239" mass="26045">MATAVLFDLDNTLYPYPPCNQAGKAAALERAQELGYDFDHESFAEFYQAGRREVKRDTGGTAASHERYLYFKRALELHTGSPRPGDALALGDAYWSAYLEEMSLVPDAKETLEELQEQGVDIAITTNLTTTIQLAKLERLGLTDYVDLVLTSEETGQEKPASVMFTLPLARLDSRASEAVMVGDDLEADIAGANAVGLETVLFDPSEESDATESADRAATERQADHSIDTLGELTDLVS</sequence>
<keyword id="KW-0119">Carbohydrate metabolism</keyword>
<keyword id="KW-0170">Cobalt</keyword>
<keyword id="KW-0378">Hydrolase</keyword>
<keyword id="KW-0460">Magnesium</keyword>
<keyword id="KW-0464">Manganese</keyword>
<keyword id="KW-0479">Metal-binding</keyword>
<keyword id="KW-0533">Nickel</keyword>
<keyword id="KW-1185">Reference proteome</keyword>
<evidence type="ECO:0000250" key="1">
    <source>
        <dbReference type="UniProtKB" id="P95649"/>
    </source>
</evidence>
<evidence type="ECO:0000256" key="2">
    <source>
        <dbReference type="SAM" id="MobiDB-lite"/>
    </source>
</evidence>
<evidence type="ECO:0000269" key="3">
    <source>
    </source>
</evidence>
<evidence type="ECO:0000303" key="4">
    <source>
    </source>
</evidence>
<evidence type="ECO:0000305" key="5"/>
<evidence type="ECO:0000312" key="6">
    <source>
        <dbReference type="EMBL" id="AEH36896.1"/>
    </source>
</evidence>
<feature type="chain" id="PRO_0000459715" description="Ribulose-1,5-bisphosphate 5-phosphatase">
    <location>
        <begin position="1"/>
        <end position="239"/>
    </location>
</feature>
<feature type="region of interest" description="Disordered" evidence="2">
    <location>
        <begin position="205"/>
        <end position="239"/>
    </location>
</feature>
<feature type="compositionally biased region" description="Basic and acidic residues" evidence="2">
    <location>
        <begin position="214"/>
        <end position="228"/>
    </location>
</feature>
<feature type="active site" description="Nucleophile" evidence="1">
    <location>
        <position position="8"/>
    </location>
</feature>
<feature type="active site" description="Proton donor" evidence="1">
    <location>
        <position position="10"/>
    </location>
</feature>
<feature type="binding site" evidence="1">
    <location>
        <position position="8"/>
    </location>
    <ligand>
        <name>Mg(2+)</name>
        <dbReference type="ChEBI" id="CHEBI:18420"/>
    </ligand>
</feature>
<feature type="binding site" evidence="1">
    <location>
        <position position="10"/>
    </location>
    <ligand>
        <name>Mg(2+)</name>
        <dbReference type="ChEBI" id="CHEBI:18420"/>
    </ligand>
</feature>
<feature type="binding site" evidence="1">
    <location>
        <position position="184"/>
    </location>
    <ligand>
        <name>Mg(2+)</name>
        <dbReference type="ChEBI" id="CHEBI:18420"/>
    </ligand>
</feature>
<name>RUBPP_HALXS</name>
<gene>
    <name evidence="6" type="ordered locus">Halxa_2271</name>
</gene>
<dbReference type="EC" id="3.1.3.109" evidence="3"/>
<dbReference type="EMBL" id="CP002839">
    <property type="protein sequence ID" value="AEH36896.1"/>
    <property type="molecule type" value="Genomic_DNA"/>
</dbReference>
<dbReference type="RefSeq" id="WP_013879788.1">
    <property type="nucleotide sequence ID" value="NC_015666.1"/>
</dbReference>
<dbReference type="SMR" id="F8D9F4"/>
<dbReference type="STRING" id="797210.Halxa_2271"/>
<dbReference type="GeneID" id="10797233"/>
<dbReference type="KEGG" id="hxa:Halxa_2271"/>
<dbReference type="eggNOG" id="arCOG02291">
    <property type="taxonomic scope" value="Archaea"/>
</dbReference>
<dbReference type="HOGENOM" id="CLU_045011_8_3_2"/>
<dbReference type="OrthoDB" id="27736at2157"/>
<dbReference type="BioCyc" id="MetaCyc:MONOMER-124393"/>
<dbReference type="Proteomes" id="UP000006794">
    <property type="component" value="Chromosome"/>
</dbReference>
<dbReference type="GO" id="GO:0046872">
    <property type="term" value="F:metal ion binding"/>
    <property type="evidence" value="ECO:0007669"/>
    <property type="project" value="UniProtKB-KW"/>
</dbReference>
<dbReference type="GO" id="GO:0016791">
    <property type="term" value="F:phosphatase activity"/>
    <property type="evidence" value="ECO:0007669"/>
    <property type="project" value="UniProtKB-ARBA"/>
</dbReference>
<dbReference type="GO" id="GO:0044283">
    <property type="term" value="P:small molecule biosynthetic process"/>
    <property type="evidence" value="ECO:0007669"/>
    <property type="project" value="UniProtKB-ARBA"/>
</dbReference>
<dbReference type="Gene3D" id="1.10.150.520">
    <property type="match status" value="1"/>
</dbReference>
<dbReference type="Gene3D" id="3.40.50.1000">
    <property type="entry name" value="HAD superfamily/HAD-like"/>
    <property type="match status" value="1"/>
</dbReference>
<dbReference type="InterPro" id="IPR051400">
    <property type="entry name" value="HAD-like_hydrolase"/>
</dbReference>
<dbReference type="InterPro" id="IPR036412">
    <property type="entry name" value="HAD-like_sf"/>
</dbReference>
<dbReference type="InterPro" id="IPR006439">
    <property type="entry name" value="HAD-SF_hydro_IA"/>
</dbReference>
<dbReference type="InterPro" id="IPR023214">
    <property type="entry name" value="HAD_sf"/>
</dbReference>
<dbReference type="NCBIfam" id="TIGR01549">
    <property type="entry name" value="HAD-SF-IA-v1"/>
    <property type="match status" value="1"/>
</dbReference>
<dbReference type="PANTHER" id="PTHR46470:SF2">
    <property type="entry name" value="GLYCERALDEHYDE 3-PHOSPHATE PHOSPHATASE"/>
    <property type="match status" value="1"/>
</dbReference>
<dbReference type="PANTHER" id="PTHR46470">
    <property type="entry name" value="N-ACYLNEURAMINATE-9-PHOSPHATASE"/>
    <property type="match status" value="1"/>
</dbReference>
<dbReference type="Pfam" id="PF00702">
    <property type="entry name" value="Hydrolase"/>
    <property type="match status" value="1"/>
</dbReference>
<dbReference type="PRINTS" id="PR00413">
    <property type="entry name" value="HADHALOGNASE"/>
</dbReference>
<dbReference type="SFLD" id="SFLDG01129">
    <property type="entry name" value="C1.5:_HAD__Beta-PGM__Phosphata"/>
    <property type="match status" value="1"/>
</dbReference>
<dbReference type="SFLD" id="SFLDS00003">
    <property type="entry name" value="Haloacid_Dehalogenase"/>
    <property type="match status" value="1"/>
</dbReference>
<dbReference type="SUPFAM" id="SSF56784">
    <property type="entry name" value="HAD-like"/>
    <property type="match status" value="1"/>
</dbReference>
<protein>
    <recommendedName>
        <fullName evidence="5">Ribulose-1,5-bisphosphate 5-phosphatase</fullName>
        <shortName evidence="4">RuBP phosphatase</shortName>
        <ecNumber evidence="3">3.1.3.109</ecNumber>
    </recommendedName>
</protein>
<comment type="function">
    <text evidence="3">Phosphatase involved in the non-carboxylating pentose bisphosphate pathway, a nucleoside degradation pathway present in some halophilic archaea (PubMed:36434094). Catalyzes the dephosphorylation of ribulose 1,5-bisphosphate (RuBP) to ribulose 1-phosphate (Ru1P) (PubMed:36434094). Shows a strict substrate specificity toward RuBP (PubMed:36434094).</text>
</comment>
<comment type="catalytic activity">
    <reaction evidence="3">
        <text>D-ribulose 1,5-bisphosphate + H2O = D-ribulose 1-phosphate + phosphate</text>
        <dbReference type="Rhea" id="RHEA:77883"/>
        <dbReference type="ChEBI" id="CHEBI:15377"/>
        <dbReference type="ChEBI" id="CHEBI:43474"/>
        <dbReference type="ChEBI" id="CHEBI:57870"/>
        <dbReference type="ChEBI" id="CHEBI:71680"/>
        <dbReference type="EC" id="3.1.3.109"/>
    </reaction>
    <physiologicalReaction direction="left-to-right" evidence="3">
        <dbReference type="Rhea" id="RHEA:77884"/>
    </physiologicalReaction>
</comment>
<comment type="cofactor">
    <cofactor evidence="3">
        <name>Mg(2+)</name>
        <dbReference type="ChEBI" id="CHEBI:18420"/>
    </cofactor>
    <cofactor evidence="3">
        <name>Mn(2+)</name>
        <dbReference type="ChEBI" id="CHEBI:29035"/>
    </cofactor>
    <cofactor evidence="3">
        <name>Co(2+)</name>
        <dbReference type="ChEBI" id="CHEBI:48828"/>
    </cofactor>
    <cofactor evidence="3">
        <name>Ni(2+)</name>
        <dbReference type="ChEBI" id="CHEBI:49786"/>
    </cofactor>
    <text evidence="3">The cation specificity is broad, with similar levels of activity detected in the presence of 1 mM Mg(2+), Mn(2+), Co(2+) and Ni(2+).</text>
</comment>
<comment type="activity regulation">
    <text evidence="3">Requires both monovalent and divalent ions for optimal activity (PubMed:36434094). Optimal KCl concentration is higher than 2.5 M (PubMed:36434094).</text>
</comment>
<comment type="biophysicochemical properties">
    <kinetics>
        <KM evidence="3">2.2 mM for ribulose 1,5-bisphosphate</KM>
        <Vmax evidence="3">31.2 umol/min/mg enzyme toward ribulose 1,5-bisphosphate</Vmax>
    </kinetics>
    <phDependence>
        <text evidence="3">Optimum pH is around 6.</text>
    </phDependence>
</comment>
<comment type="similarity">
    <text evidence="5">Belongs to the HAD-like hydrolase superfamily.</text>
</comment>
<organism>
    <name type="scientific">Halopiger xanaduensis (strain DSM 18323 / JCM 14033 / SH-6)</name>
    <dbReference type="NCBI Taxonomy" id="797210"/>
    <lineage>
        <taxon>Archaea</taxon>
        <taxon>Methanobacteriati</taxon>
        <taxon>Methanobacteriota</taxon>
        <taxon>Stenosarchaea group</taxon>
        <taxon>Halobacteria</taxon>
        <taxon>Halobacteriales</taxon>
        <taxon>Natrialbaceae</taxon>
        <taxon>Halopiger</taxon>
    </lineage>
</organism>
<accession>F8D9F4</accession>
<reference key="1">
    <citation type="journal article" date="2012" name="Stand. Genomic Sci.">
        <title>Complete genome sequence of Halopiger xanaduensis type strain (SH-6(T)).</title>
        <authorList>
            <person name="Anderson I."/>
            <person name="Tindall B.J."/>
            <person name="Rohde M."/>
            <person name="Lucas S."/>
            <person name="Han J."/>
            <person name="Lapidus A."/>
            <person name="Cheng J.F."/>
            <person name="Goodwin L."/>
            <person name="Pitluck S."/>
            <person name="Peters L."/>
            <person name="Pati A."/>
            <person name="Mikhailova N."/>
            <person name="Pagani I."/>
            <person name="Teshima H."/>
            <person name="Han C."/>
            <person name="Tapia R."/>
            <person name="Land M."/>
            <person name="Woyke T."/>
            <person name="Klenk H.P."/>
            <person name="Kyrpides N."/>
            <person name="Ivanova N."/>
        </authorList>
    </citation>
    <scope>NUCLEOTIDE SEQUENCE [LARGE SCALE GENOMIC DNA]</scope>
    <source>
        <strain>DSM 18323 / CECT 7173 / CGMCC 1.6379 / JCM 14033 / SH-6</strain>
    </source>
</reference>
<reference key="2">
    <citation type="journal article" date="2022" name="Commun. Biol.">
        <title>A non-carboxylating pentose bisphosphate pathway in halophilic archaea.</title>
        <authorList>
            <person name="Sato T."/>
            <person name="Utashima S.H."/>
            <person name="Yoshii Y."/>
            <person name="Hirata K."/>
            <person name="Kanda S."/>
            <person name="Onoda Y."/>
            <person name="Jin J.Q."/>
            <person name="Xiao S."/>
            <person name="Minami R."/>
            <person name="Fukushima H."/>
            <person name="Noguchi A."/>
            <person name="Manabe Y."/>
            <person name="Fukase K."/>
            <person name="Atomi H."/>
        </authorList>
    </citation>
    <scope>FUNCTION</scope>
    <scope>CATALYTIC ACTIVITY</scope>
    <scope>COFACTOR</scope>
    <scope>ACTIVITY REGULATION</scope>
    <scope>BIOPHYSICOCHEMICAL PROPERTIES</scope>
</reference>